<keyword id="KW-0159">Chromosome partition</keyword>
<keyword id="KW-1185">Reference proteome</keyword>
<gene>
    <name type="ORF">SPAC144.16</name>
</gene>
<protein>
    <recommendedName>
        <fullName>MIP18 family protein C144.16</fullName>
    </recommendedName>
</protein>
<dbReference type="EMBL" id="CU329670">
    <property type="protein sequence ID" value="CAB59696.1"/>
    <property type="molecule type" value="Genomic_DNA"/>
</dbReference>
<dbReference type="PIR" id="T37683">
    <property type="entry name" value="T37683"/>
</dbReference>
<dbReference type="SMR" id="Q9UTL0"/>
<dbReference type="FunCoup" id="Q9UTL0">
    <property type="interactions" value="332"/>
</dbReference>
<dbReference type="STRING" id="284812.Q9UTL0"/>
<dbReference type="iPTMnet" id="Q9UTL0"/>
<dbReference type="PaxDb" id="4896-SPAC144.16.1"/>
<dbReference type="EnsemblFungi" id="SPAC144.16.1">
    <property type="protein sequence ID" value="SPAC144.16.1:pep"/>
    <property type="gene ID" value="SPAC144.16"/>
</dbReference>
<dbReference type="KEGG" id="spo:2542897"/>
<dbReference type="PomBase" id="SPAC144.16"/>
<dbReference type="VEuPathDB" id="FungiDB:SPAC144.16"/>
<dbReference type="eggNOG" id="KOG3381">
    <property type="taxonomic scope" value="Eukaryota"/>
</dbReference>
<dbReference type="HOGENOM" id="CLU_075876_3_1_1"/>
<dbReference type="InParanoid" id="Q9UTL0"/>
<dbReference type="OMA" id="YETKEHH"/>
<dbReference type="PhylomeDB" id="Q9UTL0"/>
<dbReference type="PRO" id="PR:Q9UTL0"/>
<dbReference type="Proteomes" id="UP000002485">
    <property type="component" value="Chromosome I"/>
</dbReference>
<dbReference type="GO" id="GO:0005829">
    <property type="term" value="C:cytosol"/>
    <property type="evidence" value="ECO:0007005"/>
    <property type="project" value="PomBase"/>
</dbReference>
<dbReference type="GO" id="GO:0097361">
    <property type="term" value="C:cytosolic [4Fe-4S] assembly targeting complex"/>
    <property type="evidence" value="ECO:0000304"/>
    <property type="project" value="PomBase"/>
</dbReference>
<dbReference type="GO" id="GO:0005634">
    <property type="term" value="C:nucleus"/>
    <property type="evidence" value="ECO:0007005"/>
    <property type="project" value="PomBase"/>
</dbReference>
<dbReference type="GO" id="GO:0007059">
    <property type="term" value="P:chromosome segregation"/>
    <property type="evidence" value="ECO:0007669"/>
    <property type="project" value="UniProtKB-KW"/>
</dbReference>
<dbReference type="GO" id="GO:0051604">
    <property type="term" value="P:protein maturation"/>
    <property type="evidence" value="ECO:0007669"/>
    <property type="project" value="InterPro"/>
</dbReference>
<dbReference type="FunFam" id="3.30.300.130:FF:000004">
    <property type="entry name" value="cytosolic iron-sulfur assembly component 2A"/>
    <property type="match status" value="1"/>
</dbReference>
<dbReference type="Gene3D" id="6.10.250.1280">
    <property type="match status" value="1"/>
</dbReference>
<dbReference type="Gene3D" id="3.30.300.130">
    <property type="entry name" value="Fe-S cluster assembly (FSCA)"/>
    <property type="match status" value="1"/>
</dbReference>
<dbReference type="InterPro" id="IPR034904">
    <property type="entry name" value="FSCA_dom_sf"/>
</dbReference>
<dbReference type="InterPro" id="IPR039796">
    <property type="entry name" value="MIP18"/>
</dbReference>
<dbReference type="InterPro" id="IPR002744">
    <property type="entry name" value="MIP18-like"/>
</dbReference>
<dbReference type="PANTHER" id="PTHR12377:SF0">
    <property type="entry name" value="CYTOSOLIC IRON-SULFUR ASSEMBLY COMPONENT 2B"/>
    <property type="match status" value="1"/>
</dbReference>
<dbReference type="PANTHER" id="PTHR12377">
    <property type="entry name" value="CYTOSOLIC IRON-SULFUR ASSEMBLY COMPONENT 2B-RELATED"/>
    <property type="match status" value="1"/>
</dbReference>
<dbReference type="Pfam" id="PF01883">
    <property type="entry name" value="FeS_assembly_P"/>
    <property type="match status" value="1"/>
</dbReference>
<dbReference type="SUPFAM" id="SSF117916">
    <property type="entry name" value="Fe-S cluster assembly (FSCA) domain-like"/>
    <property type="match status" value="1"/>
</dbReference>
<accession>Q9UTL0</accession>
<organism>
    <name type="scientific">Schizosaccharomyces pombe (strain 972 / ATCC 24843)</name>
    <name type="common">Fission yeast</name>
    <dbReference type="NCBI Taxonomy" id="284812"/>
    <lineage>
        <taxon>Eukaryota</taxon>
        <taxon>Fungi</taxon>
        <taxon>Dikarya</taxon>
        <taxon>Ascomycota</taxon>
        <taxon>Taphrinomycotina</taxon>
        <taxon>Schizosaccharomycetes</taxon>
        <taxon>Schizosaccharomycetales</taxon>
        <taxon>Schizosaccharomycetaceae</taxon>
        <taxon>Schizosaccharomyces</taxon>
    </lineage>
</organism>
<reference key="1">
    <citation type="journal article" date="2002" name="Nature">
        <title>The genome sequence of Schizosaccharomyces pombe.</title>
        <authorList>
            <person name="Wood V."/>
            <person name="Gwilliam R."/>
            <person name="Rajandream M.A."/>
            <person name="Lyne M.H."/>
            <person name="Lyne R."/>
            <person name="Stewart A."/>
            <person name="Sgouros J.G."/>
            <person name="Peat N."/>
            <person name="Hayles J."/>
            <person name="Baker S.G."/>
            <person name="Basham D."/>
            <person name="Bowman S."/>
            <person name="Brooks K."/>
            <person name="Brown D."/>
            <person name="Brown S."/>
            <person name="Chillingworth T."/>
            <person name="Churcher C.M."/>
            <person name="Collins M."/>
            <person name="Connor R."/>
            <person name="Cronin A."/>
            <person name="Davis P."/>
            <person name="Feltwell T."/>
            <person name="Fraser A."/>
            <person name="Gentles S."/>
            <person name="Goble A."/>
            <person name="Hamlin N."/>
            <person name="Harris D.E."/>
            <person name="Hidalgo J."/>
            <person name="Hodgson G."/>
            <person name="Holroyd S."/>
            <person name="Hornsby T."/>
            <person name="Howarth S."/>
            <person name="Huckle E.J."/>
            <person name="Hunt S."/>
            <person name="Jagels K."/>
            <person name="James K.D."/>
            <person name="Jones L."/>
            <person name="Jones M."/>
            <person name="Leather S."/>
            <person name="McDonald S."/>
            <person name="McLean J."/>
            <person name="Mooney P."/>
            <person name="Moule S."/>
            <person name="Mungall K.L."/>
            <person name="Murphy L.D."/>
            <person name="Niblett D."/>
            <person name="Odell C."/>
            <person name="Oliver K."/>
            <person name="O'Neil S."/>
            <person name="Pearson D."/>
            <person name="Quail M.A."/>
            <person name="Rabbinowitsch E."/>
            <person name="Rutherford K.M."/>
            <person name="Rutter S."/>
            <person name="Saunders D."/>
            <person name="Seeger K."/>
            <person name="Sharp S."/>
            <person name="Skelton J."/>
            <person name="Simmonds M.N."/>
            <person name="Squares R."/>
            <person name="Squares S."/>
            <person name="Stevens K."/>
            <person name="Taylor K."/>
            <person name="Taylor R.G."/>
            <person name="Tivey A."/>
            <person name="Walsh S.V."/>
            <person name="Warren T."/>
            <person name="Whitehead S."/>
            <person name="Woodward J.R."/>
            <person name="Volckaert G."/>
            <person name="Aert R."/>
            <person name="Robben J."/>
            <person name="Grymonprez B."/>
            <person name="Weltjens I."/>
            <person name="Vanstreels E."/>
            <person name="Rieger M."/>
            <person name="Schaefer M."/>
            <person name="Mueller-Auer S."/>
            <person name="Gabel C."/>
            <person name="Fuchs M."/>
            <person name="Duesterhoeft A."/>
            <person name="Fritzc C."/>
            <person name="Holzer E."/>
            <person name="Moestl D."/>
            <person name="Hilbert H."/>
            <person name="Borzym K."/>
            <person name="Langer I."/>
            <person name="Beck A."/>
            <person name="Lehrach H."/>
            <person name="Reinhardt R."/>
            <person name="Pohl T.M."/>
            <person name="Eger P."/>
            <person name="Zimmermann W."/>
            <person name="Wedler H."/>
            <person name="Wambutt R."/>
            <person name="Purnelle B."/>
            <person name="Goffeau A."/>
            <person name="Cadieu E."/>
            <person name="Dreano S."/>
            <person name="Gloux S."/>
            <person name="Lelaure V."/>
            <person name="Mottier S."/>
            <person name="Galibert F."/>
            <person name="Aves S.J."/>
            <person name="Xiang Z."/>
            <person name="Hunt C."/>
            <person name="Moore K."/>
            <person name="Hurst S.M."/>
            <person name="Lucas M."/>
            <person name="Rochet M."/>
            <person name="Gaillardin C."/>
            <person name="Tallada V.A."/>
            <person name="Garzon A."/>
            <person name="Thode G."/>
            <person name="Daga R.R."/>
            <person name="Cruzado L."/>
            <person name="Jimenez J."/>
            <person name="Sanchez M."/>
            <person name="del Rey F."/>
            <person name="Benito J."/>
            <person name="Dominguez A."/>
            <person name="Revuelta J.L."/>
            <person name="Moreno S."/>
            <person name="Armstrong J."/>
            <person name="Forsburg S.L."/>
            <person name="Cerutti L."/>
            <person name="Lowe T."/>
            <person name="McCombie W.R."/>
            <person name="Paulsen I."/>
            <person name="Potashkin J."/>
            <person name="Shpakovski G.V."/>
            <person name="Ussery D."/>
            <person name="Barrell B.G."/>
            <person name="Nurse P."/>
        </authorList>
    </citation>
    <scope>NUCLEOTIDE SEQUENCE [LARGE SCALE GENOMIC DNA]</scope>
    <source>
        <strain>972 / ATCC 24843</strain>
    </source>
</reference>
<proteinExistence type="inferred from homology"/>
<sequence length="179" mass="20226">MSANLQNENPEVKELNQLPSRVEEEEDLLLSSTKQWLTEIESEQTNIKEERDPIDPQEIYDLLAKINDPEHPLTLAQLSVVKLEDIEVVDNVEGDSYITVHITPTIPHCSMCTLIGLCIRVRLERCLPPRFHVDVKVKKGTHASESQVNKQLNDKERVAAACENEQLLSVLNGMMATCV</sequence>
<evidence type="ECO:0000250" key="1"/>
<evidence type="ECO:0000256" key="2">
    <source>
        <dbReference type="SAM" id="MobiDB-lite"/>
    </source>
</evidence>
<evidence type="ECO:0000305" key="3"/>
<comment type="function">
    <text evidence="1">May play a role in chromosome segregation through establishment of sister chromatid cohesion.</text>
</comment>
<comment type="similarity">
    <text evidence="3">Belongs to the MIP18 family.</text>
</comment>
<feature type="chain" id="PRO_0000212698" description="MIP18 family protein C144.16">
    <location>
        <begin position="1"/>
        <end position="179"/>
    </location>
</feature>
<feature type="region of interest" description="Disordered" evidence="2">
    <location>
        <begin position="1"/>
        <end position="26"/>
    </location>
</feature>
<name>YIVG_SCHPO</name>